<name>VAT1L_HUMAN</name>
<feature type="chain" id="PRO_0000160922" description="Synaptic vesicle membrane protein VAT-1 homolog-like">
    <location>
        <begin position="1"/>
        <end position="419"/>
    </location>
</feature>
<feature type="region of interest" description="Disordered" evidence="2">
    <location>
        <begin position="1"/>
        <end position="36"/>
    </location>
</feature>
<feature type="region of interest" description="Disordered" evidence="2">
    <location>
        <begin position="384"/>
        <end position="419"/>
    </location>
</feature>
<feature type="compositionally biased region" description="Basic and acidic residues" evidence="2">
    <location>
        <begin position="1"/>
        <end position="25"/>
    </location>
</feature>
<feature type="compositionally biased region" description="Acidic residues" evidence="2">
    <location>
        <begin position="397"/>
        <end position="407"/>
    </location>
</feature>
<feature type="compositionally biased region" description="Basic and acidic residues" evidence="2">
    <location>
        <begin position="408"/>
        <end position="419"/>
    </location>
</feature>
<feature type="modified residue" description="Phosphoserine" evidence="1">
    <location>
        <position position="392"/>
    </location>
</feature>
<feature type="modified residue" description="Phosphothreonine" evidence="1">
    <location>
        <position position="393"/>
    </location>
</feature>
<feature type="modified residue" description="Phosphothreonine" evidence="1">
    <location>
        <position position="395"/>
    </location>
</feature>
<feature type="modified residue" description="Phosphoserine" evidence="1">
    <location>
        <position position="396"/>
    </location>
</feature>
<feature type="strand" evidence="5">
    <location>
        <begin position="42"/>
        <end position="47"/>
    </location>
</feature>
<feature type="strand" evidence="5">
    <location>
        <begin position="49"/>
        <end position="52"/>
    </location>
</feature>
<feature type="helix" evidence="5">
    <location>
        <begin position="53"/>
        <end position="55"/>
    </location>
</feature>
<feature type="strand" evidence="5">
    <location>
        <begin position="56"/>
        <end position="61"/>
    </location>
</feature>
<feature type="strand" evidence="5">
    <location>
        <begin position="70"/>
        <end position="80"/>
    </location>
</feature>
<feature type="helix" evidence="5">
    <location>
        <begin position="82"/>
        <end position="89"/>
    </location>
</feature>
<feature type="strand" evidence="5">
    <location>
        <begin position="92"/>
        <end position="94"/>
    </location>
</feature>
<feature type="strand" evidence="5">
    <location>
        <begin position="98"/>
        <end position="100"/>
    </location>
</feature>
<feature type="strand" evidence="5">
    <location>
        <begin position="104"/>
        <end position="113"/>
    </location>
</feature>
<feature type="strand" evidence="5">
    <location>
        <begin position="125"/>
        <end position="129"/>
    </location>
</feature>
<feature type="strand" evidence="5">
    <location>
        <begin position="135"/>
        <end position="142"/>
    </location>
</feature>
<feature type="helix" evidence="5">
    <location>
        <begin position="143"/>
        <end position="145"/>
    </location>
</feature>
<feature type="strand" evidence="5">
    <location>
        <begin position="146"/>
        <end position="148"/>
    </location>
</feature>
<feature type="helix" evidence="5">
    <location>
        <begin position="155"/>
        <end position="159"/>
    </location>
</feature>
<feature type="helix" evidence="5">
    <location>
        <begin position="162"/>
        <end position="173"/>
    </location>
</feature>
<feature type="strand" evidence="5">
    <location>
        <begin position="183"/>
        <end position="188"/>
    </location>
</feature>
<feature type="helix" evidence="5">
    <location>
        <begin position="192"/>
        <end position="201"/>
    </location>
</feature>
<feature type="strand" evidence="5">
    <location>
        <begin position="208"/>
        <end position="213"/>
    </location>
</feature>
<feature type="helix" evidence="5">
    <location>
        <begin position="215"/>
        <end position="217"/>
    </location>
</feature>
<feature type="helix" evidence="5">
    <location>
        <begin position="218"/>
        <end position="221"/>
    </location>
</feature>
<feature type="helix" evidence="5">
    <location>
        <begin position="222"/>
        <end position="224"/>
    </location>
</feature>
<feature type="strand" evidence="5">
    <location>
        <begin position="225"/>
        <end position="230"/>
    </location>
</feature>
<feature type="helix" evidence="5">
    <location>
        <begin position="235"/>
        <end position="242"/>
    </location>
</feature>
<feature type="strand" evidence="5">
    <location>
        <begin position="247"/>
        <end position="253"/>
    </location>
</feature>
<feature type="strand" evidence="5">
    <location>
        <begin position="266"/>
        <end position="275"/>
    </location>
</feature>
<feature type="helix" evidence="5">
    <location>
        <begin position="303"/>
        <end position="309"/>
    </location>
</feature>
<feature type="strand" evidence="5">
    <location>
        <begin position="312"/>
        <end position="316"/>
    </location>
</feature>
<feature type="helix" evidence="5">
    <location>
        <begin position="318"/>
        <end position="323"/>
    </location>
</feature>
<feature type="helix" evidence="5">
    <location>
        <begin position="328"/>
        <end position="343"/>
    </location>
</feature>
<feature type="strand" evidence="5">
    <location>
        <begin position="351"/>
        <end position="355"/>
    </location>
</feature>
<feature type="helix" evidence="5">
    <location>
        <begin position="357"/>
        <end position="359"/>
    </location>
</feature>
<feature type="helix" evidence="5">
    <location>
        <begin position="360"/>
        <end position="368"/>
    </location>
</feature>
<feature type="strand" evidence="5">
    <location>
        <begin position="373"/>
        <end position="379"/>
    </location>
</feature>
<sequence length="419" mass="45899">MAKEGVEKAEETEQMIEKEAGKEPAEGGGGDGSHRLGDAQEMRAVVLAGFGGLNKLRLFRKAMPEPQDGELKIRVKACGLNFIDLMVRQGNIDNPPKTPLVPGFECSGIVEALGDSVKGYEIGDRVMAFVNYNAWAEVVCTPVEFVYKIPDDMSFSEAAAFPMNFVTAYVMLFEVANLREGMSVLVHSAGGGVGQAVAQLCSTVPNVTVFGTASTFKHEAIKDSVTHLFDRNADYVQEVKRISAEGVDIVLDCLCGDNTGKGLSLLKPLGTYILYGSSNMVTGETKSFFSFAKSWWQVEKVNPIKLYEENKVIAGFSLLNLLFKQGRAGLIRGVVEKLIGLYNQKKIKPVVDSLWALEEVKEAMQRIHDRGNIGKLILDVEKTPTPLMANDSTETSEAGEEEEDHEGDSENKERMPFIQ</sequence>
<protein>
    <recommendedName>
        <fullName>Synaptic vesicle membrane protein VAT-1 homolog-like</fullName>
        <ecNumber>1.-.-.-</ecNumber>
    </recommendedName>
</protein>
<dbReference type="EC" id="1.-.-.-"/>
<dbReference type="EMBL" id="AB046796">
    <property type="protein sequence ID" value="BAB13402.1"/>
    <property type="status" value="ALT_INIT"/>
    <property type="molecule type" value="mRNA"/>
</dbReference>
<dbReference type="EMBL" id="BC033537">
    <property type="protein sequence ID" value="AAH33537.1"/>
    <property type="molecule type" value="mRNA"/>
</dbReference>
<dbReference type="CCDS" id="CCDS32492.1"/>
<dbReference type="RefSeq" id="NP_065978.1">
    <property type="nucleotide sequence ID" value="NM_020927.3"/>
</dbReference>
<dbReference type="PDB" id="4A27">
    <property type="method" value="X-ray"/>
    <property type="resolution" value="2.10 A"/>
    <property type="chains" value="A/B=41-387"/>
</dbReference>
<dbReference type="PDBsum" id="4A27"/>
<dbReference type="SMR" id="Q9HCJ6"/>
<dbReference type="BioGRID" id="121713">
    <property type="interactions" value="11"/>
</dbReference>
<dbReference type="FunCoup" id="Q9HCJ6">
    <property type="interactions" value="152"/>
</dbReference>
<dbReference type="IntAct" id="Q9HCJ6">
    <property type="interactions" value="11"/>
</dbReference>
<dbReference type="STRING" id="9606.ENSP00000303129"/>
<dbReference type="iPTMnet" id="Q9HCJ6"/>
<dbReference type="MetOSite" id="Q9HCJ6"/>
<dbReference type="PhosphoSitePlus" id="Q9HCJ6"/>
<dbReference type="BioMuta" id="VAT1L"/>
<dbReference type="DMDM" id="52783098"/>
<dbReference type="jPOST" id="Q9HCJ6"/>
<dbReference type="MassIVE" id="Q9HCJ6"/>
<dbReference type="PaxDb" id="9606-ENSP00000303129"/>
<dbReference type="PeptideAtlas" id="Q9HCJ6"/>
<dbReference type="ProteomicsDB" id="81741"/>
<dbReference type="Pumba" id="Q9HCJ6"/>
<dbReference type="Antibodypedia" id="30406">
    <property type="antibodies" value="151 antibodies from 18 providers"/>
</dbReference>
<dbReference type="DNASU" id="57687"/>
<dbReference type="Ensembl" id="ENST00000302536.3">
    <property type="protein sequence ID" value="ENSP00000303129.2"/>
    <property type="gene ID" value="ENSG00000171724.3"/>
</dbReference>
<dbReference type="GeneID" id="57687"/>
<dbReference type="KEGG" id="hsa:57687"/>
<dbReference type="MANE-Select" id="ENST00000302536.3">
    <property type="protein sequence ID" value="ENSP00000303129.2"/>
    <property type="RefSeq nucleotide sequence ID" value="NM_020927.3"/>
    <property type="RefSeq protein sequence ID" value="NP_065978.1"/>
</dbReference>
<dbReference type="UCSC" id="uc002ffg.2">
    <property type="organism name" value="human"/>
</dbReference>
<dbReference type="AGR" id="HGNC:29315"/>
<dbReference type="CTD" id="57687"/>
<dbReference type="DisGeNET" id="57687"/>
<dbReference type="GeneCards" id="VAT1L"/>
<dbReference type="HGNC" id="HGNC:29315">
    <property type="gene designation" value="VAT1L"/>
</dbReference>
<dbReference type="HPA" id="ENSG00000171724">
    <property type="expression patterns" value="Tissue enhanced (brain, choroid plexus, retina)"/>
</dbReference>
<dbReference type="MIM" id="620202">
    <property type="type" value="gene"/>
</dbReference>
<dbReference type="neXtProt" id="NX_Q9HCJ6"/>
<dbReference type="OpenTargets" id="ENSG00000171724"/>
<dbReference type="PharmGKB" id="PA164727497"/>
<dbReference type="VEuPathDB" id="HostDB:ENSG00000171724"/>
<dbReference type="eggNOG" id="KOG1198">
    <property type="taxonomic scope" value="Eukaryota"/>
</dbReference>
<dbReference type="GeneTree" id="ENSGT00940000159184"/>
<dbReference type="HOGENOM" id="CLU_026673_3_1_1"/>
<dbReference type="InParanoid" id="Q9HCJ6"/>
<dbReference type="OMA" id="LVHPVID"/>
<dbReference type="OrthoDB" id="203908at2759"/>
<dbReference type="PAN-GO" id="Q9HCJ6">
    <property type="GO annotations" value="0 GO annotations based on evolutionary models"/>
</dbReference>
<dbReference type="PhylomeDB" id="Q9HCJ6"/>
<dbReference type="TreeFam" id="TF314255"/>
<dbReference type="PathwayCommons" id="Q9HCJ6"/>
<dbReference type="SignaLink" id="Q9HCJ6"/>
<dbReference type="BioGRID-ORCS" id="57687">
    <property type="hits" value="18 hits in 1140 CRISPR screens"/>
</dbReference>
<dbReference type="ChiTaRS" id="VAT1L">
    <property type="organism name" value="human"/>
</dbReference>
<dbReference type="EvolutionaryTrace" id="Q9HCJ6"/>
<dbReference type="GenomeRNAi" id="57687"/>
<dbReference type="Pharos" id="Q9HCJ6">
    <property type="development level" value="Tdark"/>
</dbReference>
<dbReference type="PRO" id="PR:Q9HCJ6"/>
<dbReference type="Proteomes" id="UP000005640">
    <property type="component" value="Chromosome 16"/>
</dbReference>
<dbReference type="RNAct" id="Q9HCJ6">
    <property type="molecule type" value="protein"/>
</dbReference>
<dbReference type="Bgee" id="ENSG00000171724">
    <property type="expression patterns" value="Expressed in pigmented layer of retina and 140 other cell types or tissues"/>
</dbReference>
<dbReference type="GO" id="GO:0016491">
    <property type="term" value="F:oxidoreductase activity"/>
    <property type="evidence" value="ECO:0007669"/>
    <property type="project" value="UniProtKB-KW"/>
</dbReference>
<dbReference type="GO" id="GO:0008270">
    <property type="term" value="F:zinc ion binding"/>
    <property type="evidence" value="ECO:0007669"/>
    <property type="project" value="InterPro"/>
</dbReference>
<dbReference type="CDD" id="cd08275">
    <property type="entry name" value="MDR3"/>
    <property type="match status" value="1"/>
</dbReference>
<dbReference type="Gene3D" id="3.90.180.10">
    <property type="entry name" value="Medium-chain alcohol dehydrogenases, catalytic domain"/>
    <property type="match status" value="1"/>
</dbReference>
<dbReference type="Gene3D" id="3.40.50.720">
    <property type="entry name" value="NAD(P)-binding Rossmann-like Domain"/>
    <property type="match status" value="1"/>
</dbReference>
<dbReference type="InterPro" id="IPR013154">
    <property type="entry name" value="ADH-like_N"/>
</dbReference>
<dbReference type="InterPro" id="IPR011032">
    <property type="entry name" value="GroES-like_sf"/>
</dbReference>
<dbReference type="InterPro" id="IPR036291">
    <property type="entry name" value="NAD(P)-bd_dom_sf"/>
</dbReference>
<dbReference type="InterPro" id="IPR020843">
    <property type="entry name" value="PKS_ER"/>
</dbReference>
<dbReference type="InterPro" id="IPR002364">
    <property type="entry name" value="Quin_OxRdtase/zeta-crystal_CS"/>
</dbReference>
<dbReference type="InterPro" id="IPR052100">
    <property type="entry name" value="SV-ATPase_mito-regulator"/>
</dbReference>
<dbReference type="PANTHER" id="PTHR44054">
    <property type="entry name" value="SYNAPTIC VESICLE MEMBRANE PROTEIN VAT-1 HOMOLOG-LIKE"/>
    <property type="match status" value="1"/>
</dbReference>
<dbReference type="PANTHER" id="PTHR44054:SF2">
    <property type="entry name" value="SYNAPTIC VESICLE MEMBRANE PROTEIN VAT-1 HOMOLOG-LIKE"/>
    <property type="match status" value="1"/>
</dbReference>
<dbReference type="Pfam" id="PF08240">
    <property type="entry name" value="ADH_N"/>
    <property type="match status" value="1"/>
</dbReference>
<dbReference type="Pfam" id="PF13602">
    <property type="entry name" value="ADH_zinc_N_2"/>
    <property type="match status" value="1"/>
</dbReference>
<dbReference type="SMART" id="SM00829">
    <property type="entry name" value="PKS_ER"/>
    <property type="match status" value="1"/>
</dbReference>
<dbReference type="SUPFAM" id="SSF50129">
    <property type="entry name" value="GroES-like"/>
    <property type="match status" value="1"/>
</dbReference>
<dbReference type="SUPFAM" id="SSF51735">
    <property type="entry name" value="NAD(P)-binding Rossmann-fold domains"/>
    <property type="match status" value="1"/>
</dbReference>
<dbReference type="PROSITE" id="PS01162">
    <property type="entry name" value="QOR_ZETA_CRYSTAL"/>
    <property type="match status" value="1"/>
</dbReference>
<proteinExistence type="evidence at protein level"/>
<evidence type="ECO:0000250" key="1">
    <source>
        <dbReference type="UniProtKB" id="Q80TB8"/>
    </source>
</evidence>
<evidence type="ECO:0000256" key="2">
    <source>
        <dbReference type="SAM" id="MobiDB-lite"/>
    </source>
</evidence>
<evidence type="ECO:0000269" key="3">
    <source>
    </source>
</evidence>
<evidence type="ECO:0000305" key="4"/>
<evidence type="ECO:0007829" key="5">
    <source>
        <dbReference type="PDB" id="4A27"/>
    </source>
</evidence>
<organism>
    <name type="scientific">Homo sapiens</name>
    <name type="common">Human</name>
    <dbReference type="NCBI Taxonomy" id="9606"/>
    <lineage>
        <taxon>Eukaryota</taxon>
        <taxon>Metazoa</taxon>
        <taxon>Chordata</taxon>
        <taxon>Craniata</taxon>
        <taxon>Vertebrata</taxon>
        <taxon>Euteleostomi</taxon>
        <taxon>Mammalia</taxon>
        <taxon>Eutheria</taxon>
        <taxon>Euarchontoglires</taxon>
        <taxon>Primates</taxon>
        <taxon>Haplorrhini</taxon>
        <taxon>Catarrhini</taxon>
        <taxon>Hominidae</taxon>
        <taxon>Homo</taxon>
    </lineage>
</organism>
<gene>
    <name type="primary">VAT1L</name>
    <name type="synonym">KIAA1576</name>
</gene>
<comment type="interaction">
    <interactant intactId="EBI-10234766">
        <id>Q9HCJ6</id>
    </interactant>
    <interactant intactId="EBI-466029">
        <id>P42858</id>
        <label>HTT</label>
    </interactant>
    <organismsDiffer>false</organismsDiffer>
    <experiments>3</experiments>
</comment>
<comment type="interaction">
    <interactant intactId="EBI-10234766">
        <id>Q9HCJ6</id>
    </interactant>
    <interactant intactId="EBI-1221005">
        <id>P05546</id>
        <label>SERPIND1</label>
    </interactant>
    <organismsDiffer>false</organismsDiffer>
    <experiments>2</experiments>
</comment>
<comment type="interaction">
    <interactant intactId="EBI-10234766">
        <id>Q9HCJ6</id>
    </interactant>
    <interactant intactId="EBI-1993619">
        <id>Q14CS0</id>
        <label>UBXN2B</label>
    </interactant>
    <organismsDiffer>false</organismsDiffer>
    <experiments>3</experiments>
</comment>
<comment type="tissue specificity">
    <text evidence="3">Detected in skin fibroblasts.</text>
</comment>
<comment type="similarity">
    <text evidence="4">Belongs to the zinc-containing alcohol dehydrogenase family. Quinone oxidoreductase subfamily.</text>
</comment>
<comment type="sequence caution" evidence="4">
    <conflict type="erroneous initiation">
        <sequence resource="EMBL-CDS" id="BAB13402"/>
    </conflict>
</comment>
<reference key="1">
    <citation type="journal article" date="2000" name="DNA Res.">
        <title>Prediction of the coding sequences of unidentified human genes. XVIII. The complete sequences of 100 new cDNA clones from brain which code for large proteins in vitro.</title>
        <authorList>
            <person name="Nagase T."/>
            <person name="Kikuno R."/>
            <person name="Nakayama M."/>
            <person name="Hirosawa M."/>
            <person name="Ohara O."/>
        </authorList>
    </citation>
    <scope>NUCLEOTIDE SEQUENCE [LARGE SCALE MRNA]</scope>
    <source>
        <tissue>Brain</tissue>
    </source>
</reference>
<reference key="2">
    <citation type="journal article" date="2004" name="Genome Res.">
        <title>The status, quality, and expansion of the NIH full-length cDNA project: the Mammalian Gene Collection (MGC).</title>
        <authorList>
            <consortium name="The MGC Project Team"/>
        </authorList>
    </citation>
    <scope>NUCLEOTIDE SEQUENCE [LARGE SCALE MRNA]</scope>
    <source>
        <tissue>Brain</tissue>
    </source>
</reference>
<reference key="3">
    <citation type="journal article" date="2010" name="Eur. J. Hum. Genet.">
        <title>Fine mapping and association studies of a high-density lipoprotein cholesterol linkage region on chromosome 16 in French-Canadian subjects.</title>
        <authorList>
            <person name="Dastani Z."/>
            <person name="Pajukanta P."/>
            <person name="Marcil M."/>
            <person name="Rudzicz N."/>
            <person name="Ruel I."/>
            <person name="Bailey S.D."/>
            <person name="Lee J.C."/>
            <person name="Lemire M."/>
            <person name="Faith J."/>
            <person name="Platko J."/>
            <person name="Rioux J."/>
            <person name="Hudson T.J."/>
            <person name="Gaudet D."/>
            <person name="Engert J.C."/>
            <person name="Genest J."/>
        </authorList>
    </citation>
    <scope>TISSUE SPECIFICITY</scope>
</reference>
<reference key="4">
    <citation type="submission" date="2011-09" db="PDB data bank">
        <title>Crystal structure of human synaptic vesicle membrane protein Vat-1 homolog-like protein.</title>
        <authorList>
            <consortium name="Structural genomics consortium (SGC)"/>
        </authorList>
    </citation>
    <scope>X-RAY CRYSTALLOGRAPHY (2.10 ANGSTROMS) OF 41-387</scope>
</reference>
<accession>Q9HCJ6</accession>
<accession>Q8IYW8</accession>
<keyword id="KW-0002">3D-structure</keyword>
<keyword id="KW-0560">Oxidoreductase</keyword>
<keyword id="KW-0597">Phosphoprotein</keyword>
<keyword id="KW-1267">Proteomics identification</keyword>
<keyword id="KW-1185">Reference proteome</keyword>